<organism>
    <name type="scientific">Fusarium vanettenii (strain ATCC MYA-4622 / CBS 123669 / FGSC 9596 / NRRL 45880 / 77-13-4)</name>
    <name type="common">Fusarium solani subsp. pisi</name>
    <dbReference type="NCBI Taxonomy" id="660122"/>
    <lineage>
        <taxon>Eukaryota</taxon>
        <taxon>Fungi</taxon>
        <taxon>Dikarya</taxon>
        <taxon>Ascomycota</taxon>
        <taxon>Pezizomycotina</taxon>
        <taxon>Sordariomycetes</taxon>
        <taxon>Hypocreomycetidae</taxon>
        <taxon>Hypocreales</taxon>
        <taxon>Nectriaceae</taxon>
        <taxon>Fusarium</taxon>
        <taxon>Fusarium solani species complex</taxon>
        <taxon>Fusarium vanettenii</taxon>
    </lineage>
</organism>
<gene>
    <name evidence="1" type="primary">FEN1</name>
    <name type="ORF">NECHADRAFT_40444</name>
</gene>
<feature type="chain" id="PRO_0000403586" description="Flap endonuclease 1">
    <location>
        <begin position="1"/>
        <end position="395"/>
    </location>
</feature>
<feature type="region of interest" description="N-domain">
    <location>
        <begin position="1"/>
        <end position="104"/>
    </location>
</feature>
<feature type="region of interest" description="I-domain">
    <location>
        <begin position="122"/>
        <end position="253"/>
    </location>
</feature>
<feature type="region of interest" description="Interaction with PCNA" evidence="1">
    <location>
        <begin position="341"/>
        <end position="349"/>
    </location>
</feature>
<feature type="region of interest" description="Disordered" evidence="2">
    <location>
        <begin position="344"/>
        <end position="395"/>
    </location>
</feature>
<feature type="compositionally biased region" description="Basic and acidic residues" evidence="2">
    <location>
        <begin position="365"/>
        <end position="386"/>
    </location>
</feature>
<feature type="binding site" evidence="1">
    <location>
        <position position="34"/>
    </location>
    <ligand>
        <name>Mg(2+)</name>
        <dbReference type="ChEBI" id="CHEBI:18420"/>
        <label>1</label>
    </ligand>
</feature>
<feature type="binding site" evidence="1">
    <location>
        <position position="47"/>
    </location>
    <ligand>
        <name>DNA</name>
        <dbReference type="ChEBI" id="CHEBI:16991"/>
    </ligand>
</feature>
<feature type="binding site" evidence="1">
    <location>
        <position position="70"/>
    </location>
    <ligand>
        <name>DNA</name>
        <dbReference type="ChEBI" id="CHEBI:16991"/>
    </ligand>
</feature>
<feature type="binding site" evidence="1">
    <location>
        <position position="86"/>
    </location>
    <ligand>
        <name>Mg(2+)</name>
        <dbReference type="ChEBI" id="CHEBI:18420"/>
        <label>1</label>
    </ligand>
</feature>
<feature type="binding site" evidence="1">
    <location>
        <position position="158"/>
    </location>
    <ligand>
        <name>DNA</name>
        <dbReference type="ChEBI" id="CHEBI:16991"/>
    </ligand>
</feature>
<feature type="binding site" evidence="1">
    <location>
        <position position="158"/>
    </location>
    <ligand>
        <name>Mg(2+)</name>
        <dbReference type="ChEBI" id="CHEBI:18420"/>
        <label>1</label>
    </ligand>
</feature>
<feature type="binding site" evidence="1">
    <location>
        <position position="160"/>
    </location>
    <ligand>
        <name>Mg(2+)</name>
        <dbReference type="ChEBI" id="CHEBI:18420"/>
        <label>1</label>
    </ligand>
</feature>
<feature type="binding site" evidence="1">
    <location>
        <position position="179"/>
    </location>
    <ligand>
        <name>Mg(2+)</name>
        <dbReference type="ChEBI" id="CHEBI:18420"/>
        <label>2</label>
    </ligand>
</feature>
<feature type="binding site" evidence="1">
    <location>
        <position position="181"/>
    </location>
    <ligand>
        <name>Mg(2+)</name>
        <dbReference type="ChEBI" id="CHEBI:18420"/>
        <label>2</label>
    </ligand>
</feature>
<feature type="binding site" evidence="1">
    <location>
        <position position="231"/>
    </location>
    <ligand>
        <name>DNA</name>
        <dbReference type="ChEBI" id="CHEBI:16991"/>
    </ligand>
</feature>
<feature type="binding site" evidence="1">
    <location>
        <position position="233"/>
    </location>
    <ligand>
        <name>DNA</name>
        <dbReference type="ChEBI" id="CHEBI:16991"/>
    </ligand>
</feature>
<feature type="binding site" evidence="1">
    <location>
        <position position="233"/>
    </location>
    <ligand>
        <name>Mg(2+)</name>
        <dbReference type="ChEBI" id="CHEBI:18420"/>
        <label>2</label>
    </ligand>
</feature>
<keyword id="KW-0227">DNA damage</keyword>
<keyword id="KW-0234">DNA repair</keyword>
<keyword id="KW-0235">DNA replication</keyword>
<keyword id="KW-0255">Endonuclease</keyword>
<keyword id="KW-0269">Exonuclease</keyword>
<keyword id="KW-0378">Hydrolase</keyword>
<keyword id="KW-0460">Magnesium</keyword>
<keyword id="KW-0479">Metal-binding</keyword>
<keyword id="KW-0496">Mitochondrion</keyword>
<keyword id="KW-0540">Nuclease</keyword>
<keyword id="KW-0539">Nucleus</keyword>
<keyword id="KW-0597">Phosphoprotein</keyword>
<keyword id="KW-1185">Reference proteome</keyword>
<sequence length="395" mass="44774">MGIKQLFQIIKEEAPDAIKEGEIKNQFGRKVAIDASMSIYSFLIAVRSDGQQLMNDSGETTSHLMGMFYRTLRMVDNGIKPLYVFDGAPPKLKSGELAKRFQRKQEATEGLEEAKETGTAEDIEKFSRRTVRVTREHNAECQRLLKLMGIPYIIAPTEAEAQCAVLAQAGKVYAAASEDMDTLCFNSPILLRHLTFSEQRKEPIQEIHLEKVLEGLGMERKQFVDLCILLGCDYLDPIPKVGPTTALKLIRDHGSLEKIVEAMEKDPKKKYVLPEDWPYKDARDLFFEPDVRKADDPECDVKWEKPDMEGLVQFLVTEKGFSEDRVRSGGARLEKNLKSSQQARLEGFFKPVPKTDAQKAAHKRKLEEKNEEKKKKLKQEKKDKAAAKSKPRGAA</sequence>
<protein>
    <recommendedName>
        <fullName evidence="1">Flap endonuclease 1</fullName>
        <shortName evidence="1">FEN-1</shortName>
        <ecNumber evidence="1">3.1.-.-</ecNumber>
    </recommendedName>
    <alternativeName>
        <fullName evidence="1">Flap structure-specific endonuclease 1</fullName>
    </alternativeName>
</protein>
<reference key="1">
    <citation type="journal article" date="2009" name="PLoS Genet.">
        <title>The genome of Nectria haematococca: contribution of supernumerary chromosomes to gene expansion.</title>
        <authorList>
            <person name="Coleman J.J."/>
            <person name="Rounsley S.D."/>
            <person name="Rodriguez-Carres M."/>
            <person name="Kuo A."/>
            <person name="Wasmann C.C."/>
            <person name="Grimwood J."/>
            <person name="Schmutz J."/>
            <person name="Taga M."/>
            <person name="White G.J."/>
            <person name="Zhou S."/>
            <person name="Schwartz D.C."/>
            <person name="Freitag M."/>
            <person name="Ma L.-J."/>
            <person name="Danchin E.G.J."/>
            <person name="Henrissat B."/>
            <person name="Coutinho P.M."/>
            <person name="Nelson D.R."/>
            <person name="Straney D."/>
            <person name="Napoli C.A."/>
            <person name="Barker B.M."/>
            <person name="Gribskov M."/>
            <person name="Rep M."/>
            <person name="Kroken S."/>
            <person name="Molnar I."/>
            <person name="Rensing C."/>
            <person name="Kennell J.C."/>
            <person name="Zamora J."/>
            <person name="Farman M.L."/>
            <person name="Selker E.U."/>
            <person name="Salamov A."/>
            <person name="Shapiro H."/>
            <person name="Pangilinan J."/>
            <person name="Lindquist E."/>
            <person name="Lamers C."/>
            <person name="Grigoriev I.V."/>
            <person name="Geiser D.M."/>
            <person name="Covert S.F."/>
            <person name="Temporini E."/>
            <person name="VanEtten H.D."/>
        </authorList>
    </citation>
    <scope>NUCLEOTIDE SEQUENCE [LARGE SCALE GENOMIC DNA]</scope>
    <source>
        <strain>ATCC MYA-4622 / CBS 123669 / FGSC 9596 / NRRL 45880 / 77-13-4</strain>
    </source>
</reference>
<name>FEN1_FUSV7</name>
<proteinExistence type="inferred from homology"/>
<evidence type="ECO:0000255" key="1">
    <source>
        <dbReference type="HAMAP-Rule" id="MF_03140"/>
    </source>
</evidence>
<evidence type="ECO:0000256" key="2">
    <source>
        <dbReference type="SAM" id="MobiDB-lite"/>
    </source>
</evidence>
<comment type="function">
    <text evidence="1">Structure-specific nuclease with 5'-flap endonuclease and 5'-3' exonuclease activities involved in DNA replication and repair. During DNA replication, cleaves the 5'-overhanging flap structure that is generated by displacement synthesis when DNA polymerase encounters the 5'-end of a downstream Okazaki fragment. It enters the flap from the 5'-end and then tracks to cleave the flap base, leaving a nick for ligation. Also involved in the long patch base excision repair (LP-BER) pathway, by cleaving within the apurinic/apyrimidinic (AP) site-terminated flap. Acts as a genome stabilization factor that prevents flaps from equilibrating into structures that lead to duplications and deletions. Also possesses 5'-3' exonuclease activity on nicked or gapped double-stranded DNA, and exhibits RNase H activity. Also involved in replication and repair of rDNA and in repairing mitochondrial DNA.</text>
</comment>
<comment type="cofactor">
    <cofactor evidence="1">
        <name>Mg(2+)</name>
        <dbReference type="ChEBI" id="CHEBI:18420"/>
    </cofactor>
    <text evidence="1">Binds 2 magnesium ions per subunit. They probably participate in the reaction catalyzed by the enzyme. May bind an additional third magnesium ion after substrate binding.</text>
</comment>
<comment type="subunit">
    <text evidence="1">Interacts with PCNA. Three molecules of FEN1 bind to one PCNA trimer with each molecule binding to one PCNA monomer. PCNA stimulates the nuclease activity without altering cleavage specificity.</text>
</comment>
<comment type="subcellular location">
    <subcellularLocation>
        <location evidence="1">Nucleus</location>
        <location evidence="1">Nucleolus</location>
    </subcellularLocation>
    <subcellularLocation>
        <location evidence="1">Nucleus</location>
        <location evidence="1">Nucleoplasm</location>
    </subcellularLocation>
    <subcellularLocation>
        <location evidence="1">Mitochondrion</location>
    </subcellularLocation>
    <text evidence="1">Resides mostly in the nucleoli and relocalizes to the nucleoplasm upon DNA damage.</text>
</comment>
<comment type="PTM">
    <text evidence="1">Phosphorylated. Phosphorylation upon DNA damage induces relocalization to the nuclear plasma.</text>
</comment>
<comment type="similarity">
    <text evidence="1">Belongs to the XPG/RAD2 endonuclease family. FEN1 subfamily.</text>
</comment>
<dbReference type="EC" id="3.1.-.-" evidence="1"/>
<dbReference type="EMBL" id="GG698905">
    <property type="protein sequence ID" value="EEU42493.1"/>
    <property type="molecule type" value="Genomic_DNA"/>
</dbReference>
<dbReference type="RefSeq" id="XP_003048206.1">
    <property type="nucleotide sequence ID" value="XM_003048160.1"/>
</dbReference>
<dbReference type="SMR" id="C7Z125"/>
<dbReference type="FunCoup" id="C7Z125">
    <property type="interactions" value="1048"/>
</dbReference>
<dbReference type="STRING" id="660122.C7Z125"/>
<dbReference type="EnsemblFungi" id="NechaT40444">
    <property type="protein sequence ID" value="NechaP40444"/>
    <property type="gene ID" value="NechaG40444"/>
</dbReference>
<dbReference type="GeneID" id="9667378"/>
<dbReference type="KEGG" id="nhe:NECHADRAFT_40444"/>
<dbReference type="VEuPathDB" id="FungiDB:NECHADRAFT_40444"/>
<dbReference type="eggNOG" id="KOG2519">
    <property type="taxonomic scope" value="Eukaryota"/>
</dbReference>
<dbReference type="HOGENOM" id="CLU_032444_1_1_1"/>
<dbReference type="InParanoid" id="C7Z125"/>
<dbReference type="OMA" id="MGIPWVQ"/>
<dbReference type="OrthoDB" id="1937206at2759"/>
<dbReference type="Proteomes" id="UP000005206">
    <property type="component" value="Unassembled WGS sequence"/>
</dbReference>
<dbReference type="GO" id="GO:0005739">
    <property type="term" value="C:mitochondrion"/>
    <property type="evidence" value="ECO:0007669"/>
    <property type="project" value="UniProtKB-SubCell"/>
</dbReference>
<dbReference type="GO" id="GO:0005730">
    <property type="term" value="C:nucleolus"/>
    <property type="evidence" value="ECO:0007669"/>
    <property type="project" value="UniProtKB-SubCell"/>
</dbReference>
<dbReference type="GO" id="GO:0005654">
    <property type="term" value="C:nucleoplasm"/>
    <property type="evidence" value="ECO:0007669"/>
    <property type="project" value="UniProtKB-SubCell"/>
</dbReference>
<dbReference type="GO" id="GO:0008409">
    <property type="term" value="F:5'-3' exonuclease activity"/>
    <property type="evidence" value="ECO:0007669"/>
    <property type="project" value="UniProtKB-UniRule"/>
</dbReference>
<dbReference type="GO" id="GO:0017108">
    <property type="term" value="F:5'-flap endonuclease activity"/>
    <property type="evidence" value="ECO:0007669"/>
    <property type="project" value="UniProtKB-UniRule"/>
</dbReference>
<dbReference type="GO" id="GO:0003677">
    <property type="term" value="F:DNA binding"/>
    <property type="evidence" value="ECO:0007669"/>
    <property type="project" value="UniProtKB-UniRule"/>
</dbReference>
<dbReference type="GO" id="GO:0000287">
    <property type="term" value="F:magnesium ion binding"/>
    <property type="evidence" value="ECO:0007669"/>
    <property type="project" value="UniProtKB-UniRule"/>
</dbReference>
<dbReference type="GO" id="GO:0006284">
    <property type="term" value="P:base-excision repair"/>
    <property type="evidence" value="ECO:0007669"/>
    <property type="project" value="UniProtKB-UniRule"/>
</dbReference>
<dbReference type="GO" id="GO:0043137">
    <property type="term" value="P:DNA replication, removal of RNA primer"/>
    <property type="evidence" value="ECO:0007669"/>
    <property type="project" value="UniProtKB-UniRule"/>
</dbReference>
<dbReference type="CDD" id="cd09907">
    <property type="entry name" value="H3TH_FEN1-Euk"/>
    <property type="match status" value="1"/>
</dbReference>
<dbReference type="CDD" id="cd09867">
    <property type="entry name" value="PIN_FEN1"/>
    <property type="match status" value="1"/>
</dbReference>
<dbReference type="FunFam" id="1.10.150.20:FF:000009">
    <property type="entry name" value="Flap endonuclease 1"/>
    <property type="match status" value="1"/>
</dbReference>
<dbReference type="FunFam" id="3.40.50.1010:FF:000003">
    <property type="entry name" value="Flap endonuclease 1"/>
    <property type="match status" value="1"/>
</dbReference>
<dbReference type="Gene3D" id="1.10.150.20">
    <property type="entry name" value="5' to 3' exonuclease, C-terminal subdomain"/>
    <property type="match status" value="1"/>
</dbReference>
<dbReference type="Gene3D" id="3.40.50.1010">
    <property type="entry name" value="5'-nuclease"/>
    <property type="match status" value="1"/>
</dbReference>
<dbReference type="HAMAP" id="MF_00614">
    <property type="entry name" value="Fen"/>
    <property type="match status" value="1"/>
</dbReference>
<dbReference type="InterPro" id="IPR036279">
    <property type="entry name" value="5-3_exonuclease_C_sf"/>
</dbReference>
<dbReference type="InterPro" id="IPR023426">
    <property type="entry name" value="Flap_endonuc"/>
</dbReference>
<dbReference type="InterPro" id="IPR008918">
    <property type="entry name" value="HhH2"/>
</dbReference>
<dbReference type="InterPro" id="IPR029060">
    <property type="entry name" value="PIN-like_dom_sf"/>
</dbReference>
<dbReference type="InterPro" id="IPR006086">
    <property type="entry name" value="XPG-I_dom"/>
</dbReference>
<dbReference type="InterPro" id="IPR006084">
    <property type="entry name" value="XPG/Rad2"/>
</dbReference>
<dbReference type="InterPro" id="IPR019974">
    <property type="entry name" value="XPG_CS"/>
</dbReference>
<dbReference type="InterPro" id="IPR006085">
    <property type="entry name" value="XPG_DNA_repair_N"/>
</dbReference>
<dbReference type="PANTHER" id="PTHR11081:SF9">
    <property type="entry name" value="FLAP ENDONUCLEASE 1"/>
    <property type="match status" value="1"/>
</dbReference>
<dbReference type="PANTHER" id="PTHR11081">
    <property type="entry name" value="FLAP ENDONUCLEASE FAMILY MEMBER"/>
    <property type="match status" value="1"/>
</dbReference>
<dbReference type="Pfam" id="PF00867">
    <property type="entry name" value="XPG_I"/>
    <property type="match status" value="1"/>
</dbReference>
<dbReference type="Pfam" id="PF00752">
    <property type="entry name" value="XPG_N"/>
    <property type="match status" value="1"/>
</dbReference>
<dbReference type="PRINTS" id="PR00853">
    <property type="entry name" value="XPGRADSUPER"/>
</dbReference>
<dbReference type="SMART" id="SM00279">
    <property type="entry name" value="HhH2"/>
    <property type="match status" value="1"/>
</dbReference>
<dbReference type="SMART" id="SM00484">
    <property type="entry name" value="XPGI"/>
    <property type="match status" value="1"/>
</dbReference>
<dbReference type="SMART" id="SM00485">
    <property type="entry name" value="XPGN"/>
    <property type="match status" value="1"/>
</dbReference>
<dbReference type="SUPFAM" id="SSF47807">
    <property type="entry name" value="5' to 3' exonuclease, C-terminal subdomain"/>
    <property type="match status" value="1"/>
</dbReference>
<dbReference type="SUPFAM" id="SSF88723">
    <property type="entry name" value="PIN domain-like"/>
    <property type="match status" value="1"/>
</dbReference>
<dbReference type="PROSITE" id="PS00841">
    <property type="entry name" value="XPG_1"/>
    <property type="match status" value="1"/>
</dbReference>
<dbReference type="PROSITE" id="PS00842">
    <property type="entry name" value="XPG_2"/>
    <property type="match status" value="1"/>
</dbReference>
<accession>C7Z125</accession>